<dbReference type="EMBL" id="X96783">
    <property type="protein sequence ID" value="CAA65579.1"/>
    <property type="molecule type" value="Genomic_DNA"/>
</dbReference>
<dbReference type="EMBL" id="AK125182">
    <property type="protein sequence ID" value="BAG54160.1"/>
    <property type="molecule type" value="mRNA"/>
</dbReference>
<dbReference type="EMBL" id="AK295337">
    <property type="protein sequence ID" value="BAH12036.1"/>
    <property type="molecule type" value="mRNA"/>
</dbReference>
<dbReference type="EMBL" id="AC010327">
    <property type="status" value="NOT_ANNOTATED_CDS"/>
    <property type="molecule type" value="Genomic_DNA"/>
</dbReference>
<dbReference type="EMBL" id="BC046157">
    <property type="protein sequence ID" value="AAH46157.1"/>
    <property type="molecule type" value="mRNA"/>
</dbReference>
<dbReference type="CCDS" id="CCDS12919.1">
    <molecule id="O00445-1"/>
</dbReference>
<dbReference type="CCDS" id="CCDS74455.1">
    <molecule id="O00445-2"/>
</dbReference>
<dbReference type="RefSeq" id="NP_001284703.1">
    <molecule id="O00445-2"/>
    <property type="nucleotide sequence ID" value="NM_001297774.2"/>
</dbReference>
<dbReference type="RefSeq" id="NP_003171.2">
    <molecule id="O00445-1"/>
    <property type="nucleotide sequence ID" value="NM_003180.3"/>
</dbReference>
<dbReference type="RefSeq" id="XP_006723402.1">
    <molecule id="O00445-1"/>
    <property type="nucleotide sequence ID" value="XM_006723339.4"/>
</dbReference>
<dbReference type="RefSeq" id="XP_016882664.1">
    <molecule id="O00445-1"/>
    <property type="nucleotide sequence ID" value="XM_017027175.2"/>
</dbReference>
<dbReference type="RefSeq" id="XP_016882665.1">
    <property type="nucleotide sequence ID" value="XM_017027176.1"/>
</dbReference>
<dbReference type="RefSeq" id="XP_047295212.1">
    <molecule id="O00445-1"/>
    <property type="nucleotide sequence ID" value="XM_047439256.1"/>
</dbReference>
<dbReference type="RefSeq" id="XP_054177820.1">
    <molecule id="O00445-1"/>
    <property type="nucleotide sequence ID" value="XM_054321845.1"/>
</dbReference>
<dbReference type="RefSeq" id="XP_054177821.1">
    <molecule id="O00445-1"/>
    <property type="nucleotide sequence ID" value="XM_054321846.1"/>
</dbReference>
<dbReference type="RefSeq" id="XP_054177822.1">
    <molecule id="O00445-1"/>
    <property type="nucleotide sequence ID" value="XM_054321847.1"/>
</dbReference>
<dbReference type="PDB" id="5H4Y">
    <property type="method" value="X-ray"/>
    <property type="resolution" value="1.90 A"/>
    <property type="chains" value="A=102-242"/>
</dbReference>
<dbReference type="PDB" id="5H4Z">
    <property type="method" value="X-ray"/>
    <property type="resolution" value="3.01 A"/>
    <property type="chains" value="A/B=102-242"/>
</dbReference>
<dbReference type="PDBsum" id="5H4Y"/>
<dbReference type="PDBsum" id="5H4Z"/>
<dbReference type="SMR" id="O00445"/>
<dbReference type="BioGRID" id="112725">
    <property type="interactions" value="11"/>
</dbReference>
<dbReference type="ELM" id="O00445"/>
<dbReference type="FunCoup" id="O00445">
    <property type="interactions" value="98"/>
</dbReference>
<dbReference type="IntAct" id="O00445">
    <property type="interactions" value="13"/>
</dbReference>
<dbReference type="MINT" id="O00445"/>
<dbReference type="STRING" id="9606.ENSP00000346265"/>
<dbReference type="GlyGen" id="O00445">
    <property type="glycosylation" value="1 site"/>
</dbReference>
<dbReference type="iPTMnet" id="O00445"/>
<dbReference type="PhosphoSitePlus" id="O00445"/>
<dbReference type="BioMuta" id="SYT5"/>
<dbReference type="jPOST" id="O00445"/>
<dbReference type="MassIVE" id="O00445"/>
<dbReference type="PaxDb" id="9606-ENSP00000346265"/>
<dbReference type="PeptideAtlas" id="O00445"/>
<dbReference type="ProteomicsDB" id="47896">
    <molecule id="O00445-1"/>
</dbReference>
<dbReference type="ProteomicsDB" id="6480"/>
<dbReference type="Antibodypedia" id="2420">
    <property type="antibodies" value="188 antibodies from 32 providers"/>
</dbReference>
<dbReference type="DNASU" id="6861"/>
<dbReference type="Ensembl" id="ENST00000354308.8">
    <molecule id="O00445-1"/>
    <property type="protein sequence ID" value="ENSP00000346265.2"/>
    <property type="gene ID" value="ENSG00000129990.15"/>
</dbReference>
<dbReference type="Ensembl" id="ENST00000537500.5">
    <molecule id="O00445-1"/>
    <property type="protein sequence ID" value="ENSP00000442896.1"/>
    <property type="gene ID" value="ENSG00000129990.15"/>
</dbReference>
<dbReference type="Ensembl" id="ENST00000590851.5">
    <molecule id="O00445-2"/>
    <property type="protein sequence ID" value="ENSP00000465576.1"/>
    <property type="gene ID" value="ENSG00000129990.15"/>
</dbReference>
<dbReference type="GeneID" id="6861"/>
<dbReference type="KEGG" id="hsa:6861"/>
<dbReference type="MANE-Select" id="ENST00000354308.8">
    <property type="protein sequence ID" value="ENSP00000346265.2"/>
    <property type="RefSeq nucleotide sequence ID" value="NM_003180.3"/>
    <property type="RefSeq protein sequence ID" value="NP_003171.2"/>
</dbReference>
<dbReference type="UCSC" id="uc002qjm.2">
    <molecule id="O00445-1"/>
    <property type="organism name" value="human"/>
</dbReference>
<dbReference type="AGR" id="HGNC:11513"/>
<dbReference type="CTD" id="6861"/>
<dbReference type="DisGeNET" id="6861"/>
<dbReference type="GeneCards" id="SYT5"/>
<dbReference type="HGNC" id="HGNC:11513">
    <property type="gene designation" value="SYT5"/>
</dbReference>
<dbReference type="HPA" id="ENSG00000129990">
    <property type="expression patterns" value="Group enriched (brain, pituitary gland)"/>
</dbReference>
<dbReference type="MIM" id="600782">
    <property type="type" value="gene"/>
</dbReference>
<dbReference type="neXtProt" id="NX_O00445"/>
<dbReference type="OpenTargets" id="ENSG00000129990"/>
<dbReference type="PharmGKB" id="PA36294"/>
<dbReference type="VEuPathDB" id="HostDB:ENSG00000129990"/>
<dbReference type="eggNOG" id="KOG1028">
    <property type="taxonomic scope" value="Eukaryota"/>
</dbReference>
<dbReference type="GeneTree" id="ENSGT00940000161816"/>
<dbReference type="HOGENOM" id="CLU_023008_0_1_1"/>
<dbReference type="InParanoid" id="O00445"/>
<dbReference type="OMA" id="CCFCVYR"/>
<dbReference type="OrthoDB" id="67700at2759"/>
<dbReference type="PAN-GO" id="O00445">
    <property type="GO annotations" value="15 GO annotations based on evolutionary models"/>
</dbReference>
<dbReference type="PhylomeDB" id="O00445"/>
<dbReference type="TreeFam" id="TF315600"/>
<dbReference type="PathwayCommons" id="O00445"/>
<dbReference type="Reactome" id="R-HSA-422356">
    <property type="pathway name" value="Regulation of insulin secretion"/>
</dbReference>
<dbReference type="SignaLink" id="O00445"/>
<dbReference type="BioGRID-ORCS" id="6861">
    <property type="hits" value="30 hits in 1153 CRISPR screens"/>
</dbReference>
<dbReference type="CD-CODE" id="FB4E32DD">
    <property type="entry name" value="Presynaptic clusters and postsynaptic densities"/>
</dbReference>
<dbReference type="GeneWiki" id="SYT5"/>
<dbReference type="GenomeRNAi" id="6861"/>
<dbReference type="Pharos" id="O00445">
    <property type="development level" value="Tbio"/>
</dbReference>
<dbReference type="PRO" id="PR:O00445"/>
<dbReference type="Proteomes" id="UP000005640">
    <property type="component" value="Chromosome 19"/>
</dbReference>
<dbReference type="RNAct" id="O00445">
    <property type="molecule type" value="protein"/>
</dbReference>
<dbReference type="Bgee" id="ENSG00000129990">
    <property type="expression patterns" value="Expressed in cortical plate and 138 other cell types or tissues"/>
</dbReference>
<dbReference type="ExpressionAtlas" id="O00445">
    <property type="expression patterns" value="baseline and differential"/>
</dbReference>
<dbReference type="GO" id="GO:0030424">
    <property type="term" value="C:axon"/>
    <property type="evidence" value="ECO:0000318"/>
    <property type="project" value="GO_Central"/>
</dbReference>
<dbReference type="GO" id="GO:0031045">
    <property type="term" value="C:dense core granule"/>
    <property type="evidence" value="ECO:0000318"/>
    <property type="project" value="GO_Central"/>
</dbReference>
<dbReference type="GO" id="GO:0070382">
    <property type="term" value="C:exocytic vesicle"/>
    <property type="evidence" value="ECO:0000318"/>
    <property type="project" value="GO_Central"/>
</dbReference>
<dbReference type="GO" id="GO:0043025">
    <property type="term" value="C:neuronal cell body"/>
    <property type="evidence" value="ECO:0007669"/>
    <property type="project" value="Ensembl"/>
</dbReference>
<dbReference type="GO" id="GO:0099012">
    <property type="term" value="C:neuronal dense core vesicle membrane"/>
    <property type="evidence" value="ECO:0007669"/>
    <property type="project" value="Ensembl"/>
</dbReference>
<dbReference type="GO" id="GO:0048471">
    <property type="term" value="C:perinuclear region of cytoplasm"/>
    <property type="evidence" value="ECO:0007669"/>
    <property type="project" value="Ensembl"/>
</dbReference>
<dbReference type="GO" id="GO:0005886">
    <property type="term" value="C:plasma membrane"/>
    <property type="evidence" value="ECO:0000318"/>
    <property type="project" value="GO_Central"/>
</dbReference>
<dbReference type="GO" id="GO:1990769">
    <property type="term" value="C:proximal neuron projection"/>
    <property type="evidence" value="ECO:0007669"/>
    <property type="project" value="Ensembl"/>
</dbReference>
<dbReference type="GO" id="GO:0055038">
    <property type="term" value="C:recycling endosome membrane"/>
    <property type="evidence" value="ECO:0007669"/>
    <property type="project" value="UniProtKB-SubCell"/>
</dbReference>
<dbReference type="GO" id="GO:0030672">
    <property type="term" value="C:synaptic vesicle membrane"/>
    <property type="evidence" value="ECO:0000318"/>
    <property type="project" value="GO_Central"/>
</dbReference>
<dbReference type="GO" id="GO:0005509">
    <property type="term" value="F:calcium ion binding"/>
    <property type="evidence" value="ECO:0000314"/>
    <property type="project" value="UniProtKB"/>
</dbReference>
<dbReference type="GO" id="GO:0061891">
    <property type="term" value="F:calcium ion sensor activity"/>
    <property type="evidence" value="ECO:0000318"/>
    <property type="project" value="GO_Central"/>
</dbReference>
<dbReference type="GO" id="GO:0005544">
    <property type="term" value="F:calcium-dependent phospholipid binding"/>
    <property type="evidence" value="ECO:0000318"/>
    <property type="project" value="GO_Central"/>
</dbReference>
<dbReference type="GO" id="GO:0030276">
    <property type="term" value="F:clathrin binding"/>
    <property type="evidence" value="ECO:0007669"/>
    <property type="project" value="Ensembl"/>
</dbReference>
<dbReference type="GO" id="GO:0005546">
    <property type="term" value="F:phosphatidylinositol-4,5-bisphosphate binding"/>
    <property type="evidence" value="ECO:0007669"/>
    <property type="project" value="Ensembl"/>
</dbReference>
<dbReference type="GO" id="GO:0001786">
    <property type="term" value="F:phosphatidylserine binding"/>
    <property type="evidence" value="ECO:0007669"/>
    <property type="project" value="Ensembl"/>
</dbReference>
<dbReference type="GO" id="GO:0046982">
    <property type="term" value="F:protein heterodimerization activity"/>
    <property type="evidence" value="ECO:0007669"/>
    <property type="project" value="Ensembl"/>
</dbReference>
<dbReference type="GO" id="GO:0000149">
    <property type="term" value="F:SNARE binding"/>
    <property type="evidence" value="ECO:0000318"/>
    <property type="project" value="GO_Central"/>
</dbReference>
<dbReference type="GO" id="GO:0019905">
    <property type="term" value="F:syntaxin binding"/>
    <property type="evidence" value="ECO:0007669"/>
    <property type="project" value="Ensembl"/>
</dbReference>
<dbReference type="GO" id="GO:0099502">
    <property type="term" value="P:calcium-dependent activation of synaptic vesicle fusion"/>
    <property type="evidence" value="ECO:0000318"/>
    <property type="project" value="GO_Central"/>
</dbReference>
<dbReference type="GO" id="GO:0007268">
    <property type="term" value="P:chemical synaptic transmission"/>
    <property type="evidence" value="ECO:0000304"/>
    <property type="project" value="ProtInc"/>
</dbReference>
<dbReference type="GO" id="GO:0017158">
    <property type="term" value="P:regulation of calcium ion-dependent exocytosis"/>
    <property type="evidence" value="ECO:0000318"/>
    <property type="project" value="GO_Central"/>
</dbReference>
<dbReference type="GO" id="GO:2000300">
    <property type="term" value="P:regulation of synaptic vesicle exocytosis"/>
    <property type="evidence" value="ECO:0000318"/>
    <property type="project" value="GO_Central"/>
</dbReference>
<dbReference type="GO" id="GO:0016192">
    <property type="term" value="P:vesicle-mediated transport"/>
    <property type="evidence" value="ECO:0000318"/>
    <property type="project" value="GO_Central"/>
</dbReference>
<dbReference type="CDD" id="cd08385">
    <property type="entry name" value="C2A_Synaptotagmin-1-5-6-9-10"/>
    <property type="match status" value="1"/>
</dbReference>
<dbReference type="CDD" id="cd21342">
    <property type="entry name" value="Syt1_2_N"/>
    <property type="match status" value="1"/>
</dbReference>
<dbReference type="FunFam" id="2.60.40.150:FF:000007">
    <property type="entry name" value="Synaptotagmin 1"/>
    <property type="match status" value="1"/>
</dbReference>
<dbReference type="FunFam" id="2.60.40.150:FF:000111">
    <property type="entry name" value="synaptotagmin-5 isoform X1"/>
    <property type="match status" value="1"/>
</dbReference>
<dbReference type="Gene3D" id="2.60.40.150">
    <property type="entry name" value="C2 domain"/>
    <property type="match status" value="2"/>
</dbReference>
<dbReference type="InterPro" id="IPR000008">
    <property type="entry name" value="C2_dom"/>
</dbReference>
<dbReference type="InterPro" id="IPR035892">
    <property type="entry name" value="C2_domain_sf"/>
</dbReference>
<dbReference type="InterPro" id="IPR001565">
    <property type="entry name" value="Synaptotagmin"/>
</dbReference>
<dbReference type="PANTHER" id="PTHR10024">
    <property type="entry name" value="SYNAPTOTAGMIN"/>
    <property type="match status" value="1"/>
</dbReference>
<dbReference type="PANTHER" id="PTHR10024:SF282">
    <property type="entry name" value="SYNAPTOTAGMIN-5"/>
    <property type="match status" value="1"/>
</dbReference>
<dbReference type="Pfam" id="PF00168">
    <property type="entry name" value="C2"/>
    <property type="match status" value="2"/>
</dbReference>
<dbReference type="PRINTS" id="PR00360">
    <property type="entry name" value="C2DOMAIN"/>
</dbReference>
<dbReference type="PRINTS" id="PR00399">
    <property type="entry name" value="SYNAPTOTAGMN"/>
</dbReference>
<dbReference type="SMART" id="SM00239">
    <property type="entry name" value="C2"/>
    <property type="match status" value="2"/>
</dbReference>
<dbReference type="SUPFAM" id="SSF49562">
    <property type="entry name" value="C2 domain (Calcium/lipid-binding domain, CaLB)"/>
    <property type="match status" value="2"/>
</dbReference>
<dbReference type="PROSITE" id="PS50004">
    <property type="entry name" value="C2"/>
    <property type="match status" value="2"/>
</dbReference>
<organism>
    <name type="scientific">Homo sapiens</name>
    <name type="common">Human</name>
    <dbReference type="NCBI Taxonomy" id="9606"/>
    <lineage>
        <taxon>Eukaryota</taxon>
        <taxon>Metazoa</taxon>
        <taxon>Chordata</taxon>
        <taxon>Craniata</taxon>
        <taxon>Vertebrata</taxon>
        <taxon>Euteleostomi</taxon>
        <taxon>Mammalia</taxon>
        <taxon>Eutheria</taxon>
        <taxon>Euarchontoglires</taxon>
        <taxon>Primates</taxon>
        <taxon>Haplorrhini</taxon>
        <taxon>Catarrhini</taxon>
        <taxon>Hominidae</taxon>
        <taxon>Homo</taxon>
    </lineage>
</organism>
<feature type="chain" id="PRO_0000183951" description="Synaptotagmin-5">
    <location>
        <begin position="1"/>
        <end position="386"/>
    </location>
</feature>
<feature type="topological domain" description="Vesicular" evidence="3">
    <location>
        <begin position="1"/>
        <end position="24"/>
    </location>
</feature>
<feature type="transmembrane region" description="Helical" evidence="3">
    <location>
        <begin position="25"/>
        <end position="45"/>
    </location>
</feature>
<feature type="topological domain" description="Cytoplasmic" evidence="3">
    <location>
        <begin position="46"/>
        <end position="386"/>
    </location>
</feature>
<feature type="domain" description="C2 1" evidence="4">
    <location>
        <begin position="108"/>
        <end position="227"/>
    </location>
</feature>
<feature type="domain" description="C2 2" evidence="4">
    <location>
        <begin position="239"/>
        <end position="372"/>
    </location>
</feature>
<feature type="region of interest" description="Disordered" evidence="5">
    <location>
        <begin position="1"/>
        <end position="23"/>
    </location>
</feature>
<feature type="compositionally biased region" description="Pro residues" evidence="5">
    <location>
        <begin position="1"/>
        <end position="16"/>
    </location>
</feature>
<feature type="binding site" evidence="4">
    <location>
        <position position="138"/>
    </location>
    <ligand>
        <name>Ca(2+)</name>
        <dbReference type="ChEBI" id="CHEBI:29108"/>
        <label>2</label>
    </ligand>
</feature>
<feature type="binding site" evidence="4">
    <location>
        <position position="139"/>
    </location>
    <ligand>
        <name>Ca(2+)</name>
        <dbReference type="ChEBI" id="CHEBI:29108"/>
        <label>1</label>
    </ligand>
</feature>
<feature type="binding site" evidence="4">
    <location>
        <position position="139"/>
    </location>
    <ligand>
        <name>Ca(2+)</name>
        <dbReference type="ChEBI" id="CHEBI:29108"/>
        <label>2</label>
    </ligand>
</feature>
<feature type="binding site" evidence="4">
    <location>
        <position position="145"/>
    </location>
    <ligand>
        <name>Ca(2+)</name>
        <dbReference type="ChEBI" id="CHEBI:29108"/>
        <label>1</label>
    </ligand>
</feature>
<feature type="binding site" evidence="4">
    <location>
        <position position="197"/>
    </location>
    <ligand>
        <name>Ca(2+)</name>
        <dbReference type="ChEBI" id="CHEBI:29108"/>
        <label>1</label>
    </ligand>
</feature>
<feature type="binding site" evidence="4">
    <location>
        <position position="197"/>
    </location>
    <ligand>
        <name>Ca(2+)</name>
        <dbReference type="ChEBI" id="CHEBI:29108"/>
        <label>2</label>
    </ligand>
</feature>
<feature type="binding site" evidence="4">
    <location>
        <position position="198"/>
    </location>
    <ligand>
        <name>Ca(2+)</name>
        <dbReference type="ChEBI" id="CHEBI:29108"/>
        <label>1</label>
    </ligand>
</feature>
<feature type="binding site" evidence="4">
    <location>
        <position position="199"/>
    </location>
    <ligand>
        <name>Ca(2+)</name>
        <dbReference type="ChEBI" id="CHEBI:29108"/>
        <label>1</label>
    </ligand>
</feature>
<feature type="binding site" evidence="4">
    <location>
        <position position="199"/>
    </location>
    <ligand>
        <name>Ca(2+)</name>
        <dbReference type="ChEBI" id="CHEBI:29108"/>
        <label>2</label>
    </ligand>
</feature>
<feature type="binding site" evidence="4">
    <location>
        <position position="199"/>
    </location>
    <ligand>
        <name>Ca(2+)</name>
        <dbReference type="ChEBI" id="CHEBI:29108"/>
        <label>3</label>
    </ligand>
</feature>
<feature type="binding site" evidence="4">
    <location>
        <position position="202"/>
    </location>
    <ligand>
        <name>Ca(2+)</name>
        <dbReference type="ChEBI" id="CHEBI:29108"/>
        <label>3</label>
    </ligand>
</feature>
<feature type="binding site" evidence="4">
    <location>
        <position position="205"/>
    </location>
    <ligand>
        <name>Ca(2+)</name>
        <dbReference type="ChEBI" id="CHEBI:29108"/>
        <label>2</label>
    </ligand>
</feature>
<feature type="binding site" evidence="4">
    <location>
        <position position="205"/>
    </location>
    <ligand>
        <name>Ca(2+)</name>
        <dbReference type="ChEBI" id="CHEBI:29108"/>
        <label>3</label>
    </ligand>
</feature>
<feature type="binding site" evidence="4">
    <location>
        <position position="270"/>
    </location>
    <ligand>
        <name>Ca(2+)</name>
        <dbReference type="ChEBI" id="CHEBI:29108"/>
        <label>4</label>
    </ligand>
</feature>
<feature type="binding site" evidence="4">
    <location>
        <position position="276"/>
    </location>
    <ligand>
        <name>Ca(2+)</name>
        <dbReference type="ChEBI" id="CHEBI:29108"/>
        <label>4</label>
    </ligand>
</feature>
<feature type="binding site" evidence="4">
    <location>
        <position position="330"/>
    </location>
    <ligand>
        <name>Ca(2+)</name>
        <dbReference type="ChEBI" id="CHEBI:29108"/>
        <label>4</label>
    </ligand>
</feature>
<feature type="binding site" evidence="4">
    <location>
        <position position="332"/>
    </location>
    <ligand>
        <name>Ca(2+)</name>
        <dbReference type="ChEBI" id="CHEBI:29108"/>
        <label>4</label>
    </ligand>
</feature>
<feature type="splice variant" id="VSP_057177" description="In isoform 2." evidence="10">
    <original>MFPEPPTPGPPSPDTPPDSSRISHGPVPPWALATIVLVSGLLIFSCCFCLYRKSCRRRTGKKSQAQAQVHLQEVKGLGQSYIDK</original>
    <variation>MTRGGCPVSARLFAQRPHGSWSSLLCVGLKGRLGWEWGTRVLECLCRKDSRTPPPCSRSPQPRGLHRPTRLPTPVASATAQ</variation>
    <location>
        <begin position="1"/>
        <end position="84"/>
    </location>
</feature>
<feature type="splice variant" id="VSP_057178" description="In isoform 2." evidence="10">
    <location>
        <position position="237"/>
    </location>
</feature>
<feature type="sequence variant" id="VAR_052240" description="In dbSNP:rs2301279.">
    <original>E</original>
    <variation>D</variation>
    <location>
        <position position="4"/>
    </location>
</feature>
<feature type="sequence variant" id="VAR_034528" description="In dbSNP:rs11542503." evidence="6 8">
    <original>R</original>
    <variation>Q</variation>
    <location>
        <position position="111"/>
    </location>
</feature>
<feature type="mutagenesis site" description="Does not affect Ca(2+) affinity as measured by isothermal titration calorimetry of the mutant protein." evidence="9">
    <original>S</original>
    <variation>G</variation>
    <location>
        <position position="202"/>
    </location>
</feature>
<feature type="sequence conflict" description="In Ref. 2; BAG54160." evidence="11" ref="2">
    <original>H</original>
    <variation>R</variation>
    <location>
        <position position="24"/>
    </location>
</feature>
<feature type="strand" evidence="14">
    <location>
        <begin position="111"/>
        <end position="119"/>
    </location>
</feature>
<feature type="turn" evidence="14">
    <location>
        <begin position="120"/>
        <end position="123"/>
    </location>
</feature>
<feature type="strand" evidence="14">
    <location>
        <begin position="124"/>
        <end position="134"/>
    </location>
</feature>
<feature type="strand" evidence="14">
    <location>
        <begin position="146"/>
        <end position="153"/>
    </location>
</feature>
<feature type="strand" evidence="14">
    <location>
        <begin position="157"/>
        <end position="161"/>
    </location>
</feature>
<feature type="strand" evidence="14">
    <location>
        <begin position="172"/>
        <end position="180"/>
    </location>
</feature>
<feature type="helix" evidence="14">
    <location>
        <begin position="183"/>
        <end position="188"/>
    </location>
</feature>
<feature type="strand" evidence="14">
    <location>
        <begin position="190"/>
        <end position="197"/>
    </location>
</feature>
<feature type="strand" evidence="14">
    <location>
        <begin position="200"/>
        <end position="202"/>
    </location>
</feature>
<feature type="strand" evidence="14">
    <location>
        <begin position="205"/>
        <end position="213"/>
    </location>
</feature>
<feature type="helix" evidence="14">
    <location>
        <begin position="214"/>
        <end position="216"/>
    </location>
</feature>
<feature type="strand" evidence="14">
    <location>
        <begin position="223"/>
        <end position="228"/>
    </location>
</feature>
<sequence>MFPEPPTPGPPSPDTPPDSSRISHGPVPPWALATIVLVSGLLIFSCCFCLYRKSCRRRTGKKSQAQAQVHLQEVKGLGQSYIDKVQPEVEELEPAPSGPGQQVADKHELGRLQYSLDYDFQSGQLLVGILQAMGLAALDLGGSSDPYVRVYLLPDKRRRYETKVHRQTLNPHFGETFAFKVPYVELGGRVLVMAVYDFDRFSRNDAIGEVRVPMSSVDLGRPVQAWRELQAAPREEQEKLGDICFSLRYVPTAGKLTVIVLEAKNLKKMDVGGLSDPYVKVHLLQGGKKVRKKKTTIKKNTLNPYYNEAFSFEVPCDQVQKVQVELTVLDYDKLGKNEAIGRVAVGAAAGGAGLRHWADMLANPRRPIAQWHSLRPPDRVRLLPAP</sequence>
<accession>O00445</accession>
<accession>B3KWJ8</accession>
<accession>B7Z300</accession>
<accession>Q86X72</accession>
<name>SYT5_HUMAN</name>
<proteinExistence type="evidence at protein level"/>
<keyword id="KW-0002">3D-structure</keyword>
<keyword id="KW-0025">Alternative splicing</keyword>
<keyword id="KW-0106">Calcium</keyword>
<keyword id="KW-0968">Cytoplasmic vesicle</keyword>
<keyword id="KW-0967">Endosome</keyword>
<keyword id="KW-0472">Membrane</keyword>
<keyword id="KW-0479">Metal-binding</keyword>
<keyword id="KW-1267">Proteomics identification</keyword>
<keyword id="KW-1185">Reference proteome</keyword>
<keyword id="KW-0677">Repeat</keyword>
<keyword id="KW-0770">Synapse</keyword>
<keyword id="KW-0812">Transmembrane</keyword>
<keyword id="KW-1133">Transmembrane helix</keyword>
<reference key="1">
    <citation type="journal article" date="1997" name="Genomics">
        <title>Human synaptotagmin V (SYT5): sequence, genomic structure, and chromosomal location.</title>
        <authorList>
            <person name="Craxton M.A."/>
            <person name="Olsen A."/>
            <person name="Goedert M."/>
        </authorList>
    </citation>
    <scope>NUCLEOTIDE SEQUENCE [GENOMIC DNA]</scope>
    <source>
        <tissue>Brain</tissue>
    </source>
</reference>
<reference key="2">
    <citation type="journal article" date="2004" name="Nat. Genet.">
        <title>Complete sequencing and characterization of 21,243 full-length human cDNAs.</title>
        <authorList>
            <person name="Ota T."/>
            <person name="Suzuki Y."/>
            <person name="Nishikawa T."/>
            <person name="Otsuki T."/>
            <person name="Sugiyama T."/>
            <person name="Irie R."/>
            <person name="Wakamatsu A."/>
            <person name="Hayashi K."/>
            <person name="Sato H."/>
            <person name="Nagai K."/>
            <person name="Kimura K."/>
            <person name="Makita H."/>
            <person name="Sekine M."/>
            <person name="Obayashi M."/>
            <person name="Nishi T."/>
            <person name="Shibahara T."/>
            <person name="Tanaka T."/>
            <person name="Ishii S."/>
            <person name="Yamamoto J."/>
            <person name="Saito K."/>
            <person name="Kawai Y."/>
            <person name="Isono Y."/>
            <person name="Nakamura Y."/>
            <person name="Nagahari K."/>
            <person name="Murakami K."/>
            <person name="Yasuda T."/>
            <person name="Iwayanagi T."/>
            <person name="Wagatsuma M."/>
            <person name="Shiratori A."/>
            <person name="Sudo H."/>
            <person name="Hosoiri T."/>
            <person name="Kaku Y."/>
            <person name="Kodaira H."/>
            <person name="Kondo H."/>
            <person name="Sugawara M."/>
            <person name="Takahashi M."/>
            <person name="Kanda K."/>
            <person name="Yokoi T."/>
            <person name="Furuya T."/>
            <person name="Kikkawa E."/>
            <person name="Omura Y."/>
            <person name="Abe K."/>
            <person name="Kamihara K."/>
            <person name="Katsuta N."/>
            <person name="Sato K."/>
            <person name="Tanikawa M."/>
            <person name="Yamazaki M."/>
            <person name="Ninomiya K."/>
            <person name="Ishibashi T."/>
            <person name="Yamashita H."/>
            <person name="Murakawa K."/>
            <person name="Fujimori K."/>
            <person name="Tanai H."/>
            <person name="Kimata M."/>
            <person name="Watanabe M."/>
            <person name="Hiraoka S."/>
            <person name="Chiba Y."/>
            <person name="Ishida S."/>
            <person name="Ono Y."/>
            <person name="Takiguchi S."/>
            <person name="Watanabe S."/>
            <person name="Yosida M."/>
            <person name="Hotuta T."/>
            <person name="Kusano J."/>
            <person name="Kanehori K."/>
            <person name="Takahashi-Fujii A."/>
            <person name="Hara H."/>
            <person name="Tanase T.-O."/>
            <person name="Nomura Y."/>
            <person name="Togiya S."/>
            <person name="Komai F."/>
            <person name="Hara R."/>
            <person name="Takeuchi K."/>
            <person name="Arita M."/>
            <person name="Imose N."/>
            <person name="Musashino K."/>
            <person name="Yuuki H."/>
            <person name="Oshima A."/>
            <person name="Sasaki N."/>
            <person name="Aotsuka S."/>
            <person name="Yoshikawa Y."/>
            <person name="Matsunawa H."/>
            <person name="Ichihara T."/>
            <person name="Shiohata N."/>
            <person name="Sano S."/>
            <person name="Moriya S."/>
            <person name="Momiyama H."/>
            <person name="Satoh N."/>
            <person name="Takami S."/>
            <person name="Terashima Y."/>
            <person name="Suzuki O."/>
            <person name="Nakagawa S."/>
            <person name="Senoh A."/>
            <person name="Mizoguchi H."/>
            <person name="Goto Y."/>
            <person name="Shimizu F."/>
            <person name="Wakebe H."/>
            <person name="Hishigaki H."/>
            <person name="Watanabe T."/>
            <person name="Sugiyama A."/>
            <person name="Takemoto M."/>
            <person name="Kawakami B."/>
            <person name="Yamazaki M."/>
            <person name="Watanabe K."/>
            <person name="Kumagai A."/>
            <person name="Itakura S."/>
            <person name="Fukuzumi Y."/>
            <person name="Fujimori Y."/>
            <person name="Komiyama M."/>
            <person name="Tashiro H."/>
            <person name="Tanigami A."/>
            <person name="Fujiwara T."/>
            <person name="Ono T."/>
            <person name="Yamada K."/>
            <person name="Fujii Y."/>
            <person name="Ozaki K."/>
            <person name="Hirao M."/>
            <person name="Ohmori Y."/>
            <person name="Kawabata A."/>
            <person name="Hikiji T."/>
            <person name="Kobatake N."/>
            <person name="Inagaki H."/>
            <person name="Ikema Y."/>
            <person name="Okamoto S."/>
            <person name="Okitani R."/>
            <person name="Kawakami T."/>
            <person name="Noguchi S."/>
            <person name="Itoh T."/>
            <person name="Shigeta K."/>
            <person name="Senba T."/>
            <person name="Matsumura K."/>
            <person name="Nakajima Y."/>
            <person name="Mizuno T."/>
            <person name="Morinaga M."/>
            <person name="Sasaki M."/>
            <person name="Togashi T."/>
            <person name="Oyama M."/>
            <person name="Hata H."/>
            <person name="Watanabe M."/>
            <person name="Komatsu T."/>
            <person name="Mizushima-Sugano J."/>
            <person name="Satoh T."/>
            <person name="Shirai Y."/>
            <person name="Takahashi Y."/>
            <person name="Nakagawa K."/>
            <person name="Okumura K."/>
            <person name="Nagase T."/>
            <person name="Nomura N."/>
            <person name="Kikuchi H."/>
            <person name="Masuho Y."/>
            <person name="Yamashita R."/>
            <person name="Nakai K."/>
            <person name="Yada T."/>
            <person name="Nakamura Y."/>
            <person name="Ohara O."/>
            <person name="Isogai T."/>
            <person name="Sugano S."/>
        </authorList>
    </citation>
    <scope>NUCLEOTIDE SEQUENCE [LARGE SCALE MRNA] (ISOFORMS 1 AND 2)</scope>
    <source>
        <tissue>Brain</tissue>
        <tissue>Caudate nucleus</tissue>
    </source>
</reference>
<reference key="3">
    <citation type="journal article" date="2004" name="Nature">
        <title>The DNA sequence and biology of human chromosome 19.</title>
        <authorList>
            <person name="Grimwood J."/>
            <person name="Gordon L.A."/>
            <person name="Olsen A.S."/>
            <person name="Terry A."/>
            <person name="Schmutz J."/>
            <person name="Lamerdin J.E."/>
            <person name="Hellsten U."/>
            <person name="Goodstein D."/>
            <person name="Couronne O."/>
            <person name="Tran-Gyamfi M."/>
            <person name="Aerts A."/>
            <person name="Altherr M."/>
            <person name="Ashworth L."/>
            <person name="Bajorek E."/>
            <person name="Black S."/>
            <person name="Branscomb E."/>
            <person name="Caenepeel S."/>
            <person name="Carrano A.V."/>
            <person name="Caoile C."/>
            <person name="Chan Y.M."/>
            <person name="Christensen M."/>
            <person name="Cleland C.A."/>
            <person name="Copeland A."/>
            <person name="Dalin E."/>
            <person name="Dehal P."/>
            <person name="Denys M."/>
            <person name="Detter J.C."/>
            <person name="Escobar J."/>
            <person name="Flowers D."/>
            <person name="Fotopulos D."/>
            <person name="Garcia C."/>
            <person name="Georgescu A.M."/>
            <person name="Glavina T."/>
            <person name="Gomez M."/>
            <person name="Gonzales E."/>
            <person name="Groza M."/>
            <person name="Hammon N."/>
            <person name="Hawkins T."/>
            <person name="Haydu L."/>
            <person name="Ho I."/>
            <person name="Huang W."/>
            <person name="Israni S."/>
            <person name="Jett J."/>
            <person name="Kadner K."/>
            <person name="Kimball H."/>
            <person name="Kobayashi A."/>
            <person name="Larionov V."/>
            <person name="Leem S.-H."/>
            <person name="Lopez F."/>
            <person name="Lou Y."/>
            <person name="Lowry S."/>
            <person name="Malfatti S."/>
            <person name="Martinez D."/>
            <person name="McCready P.M."/>
            <person name="Medina C."/>
            <person name="Morgan J."/>
            <person name="Nelson K."/>
            <person name="Nolan M."/>
            <person name="Ovcharenko I."/>
            <person name="Pitluck S."/>
            <person name="Pollard M."/>
            <person name="Popkie A.P."/>
            <person name="Predki P."/>
            <person name="Quan G."/>
            <person name="Ramirez L."/>
            <person name="Rash S."/>
            <person name="Retterer J."/>
            <person name="Rodriguez A."/>
            <person name="Rogers S."/>
            <person name="Salamov A."/>
            <person name="Salazar A."/>
            <person name="She X."/>
            <person name="Smith D."/>
            <person name="Slezak T."/>
            <person name="Solovyev V."/>
            <person name="Thayer N."/>
            <person name="Tice H."/>
            <person name="Tsai M."/>
            <person name="Ustaszewska A."/>
            <person name="Vo N."/>
            <person name="Wagner M."/>
            <person name="Wheeler J."/>
            <person name="Wu K."/>
            <person name="Xie G."/>
            <person name="Yang J."/>
            <person name="Dubchak I."/>
            <person name="Furey T.S."/>
            <person name="DeJong P."/>
            <person name="Dickson M."/>
            <person name="Gordon D."/>
            <person name="Eichler E.E."/>
            <person name="Pennacchio L.A."/>
            <person name="Richardson P."/>
            <person name="Stubbs L."/>
            <person name="Rokhsar D.S."/>
            <person name="Myers R.M."/>
            <person name="Rubin E.M."/>
            <person name="Lucas S.M."/>
        </authorList>
    </citation>
    <scope>NUCLEOTIDE SEQUENCE [LARGE SCALE GENOMIC DNA]</scope>
</reference>
<reference key="4">
    <citation type="journal article" date="2004" name="Genome Res.">
        <title>The status, quality, and expansion of the NIH full-length cDNA project: the Mammalian Gene Collection (MGC).</title>
        <authorList>
            <consortium name="The MGC Project Team"/>
        </authorList>
    </citation>
    <scope>NUCLEOTIDE SEQUENCE [LARGE SCALE MRNA] (ISOFORM 1)</scope>
    <scope>VARIANT GLN-111</scope>
    <source>
        <tissue>Brain</tissue>
    </source>
</reference>
<reference evidence="12 13" key="5">
    <citation type="journal article" date="2017" name="Int. J. Biol. Macromol.">
        <title>Structural analysis of Ca2+-binding pocket of synaptotagmin 5 C2A domain.</title>
        <authorList>
            <person name="Qiu X."/>
            <person name="Ge J."/>
            <person name="Gao Y."/>
            <person name="Teng M."/>
            <person name="Niu L."/>
        </authorList>
    </citation>
    <scope>X-RAY CRYSTALLOGRAPHY (1.90 ANGSTROMS) OF 107-233 IN COMPLEX WITH CALCIUM</scope>
    <scope>X-RAY CRYSTALLOGRAPHY (1.90 ANGSTROMS) OF 105-233 OF MUTANT GLY-202 IN COMPLEX WITH CALCIUM</scope>
    <scope>MUTAGENESIS OF SER-202</scope>
</reference>
<gene>
    <name type="primary">SYT5</name>
</gene>
<protein>
    <recommendedName>
        <fullName>Synaptotagmin-5</fullName>
    </recommendedName>
    <alternativeName>
        <fullName>Synaptotagmin V</fullName>
        <shortName>SytV</shortName>
    </alternativeName>
</protein>
<evidence type="ECO:0000250" key="1"/>
<evidence type="ECO:0000250" key="2">
    <source>
        <dbReference type="UniProtKB" id="P47861"/>
    </source>
</evidence>
<evidence type="ECO:0000255" key="3"/>
<evidence type="ECO:0000255" key="4">
    <source>
        <dbReference type="PROSITE-ProRule" id="PRU00041"/>
    </source>
</evidence>
<evidence type="ECO:0000256" key="5">
    <source>
        <dbReference type="SAM" id="MobiDB-lite"/>
    </source>
</evidence>
<evidence type="ECO:0000269" key="6">
    <source>
    </source>
</evidence>
<evidence type="ECO:0000269" key="7">
    <source>
    </source>
</evidence>
<evidence type="ECO:0000269" key="8">
    <source>
    </source>
</evidence>
<evidence type="ECO:0000269" key="9">
    <source>
    </source>
</evidence>
<evidence type="ECO:0000303" key="10">
    <source>
    </source>
</evidence>
<evidence type="ECO:0000305" key="11"/>
<evidence type="ECO:0007744" key="12">
    <source>
        <dbReference type="PDB" id="5H4Y"/>
    </source>
</evidence>
<evidence type="ECO:0007744" key="13">
    <source>
        <dbReference type="PDB" id="5H4Z"/>
    </source>
</evidence>
<evidence type="ECO:0007829" key="14">
    <source>
        <dbReference type="PDB" id="5H4Y"/>
    </source>
</evidence>
<comment type="function">
    <text evidence="1">May be involved in Ca(2+)-dependent exocytosis of secretory vesicles through Ca(2+) and phospholipid binding to the C2 domain or may serve as Ca(2+) sensors in the process of vesicular trafficking and exocytosis. Regulates the Ca(2+)-dependent secretion of norepinephrine in PC12 cells. Required for export from the endocytic recycling compartment to the cell surface (By similarity).</text>
</comment>
<comment type="cofactor">
    <cofactor evidence="4 9">
        <name>Ca(2+)</name>
        <dbReference type="ChEBI" id="CHEBI:29108"/>
    </cofactor>
    <text evidence="7">Binds 3 Ca(2+) ions per subunit. The ions are bound to the C2 domains.</text>
</comment>
<comment type="subunit">
    <text evidence="1 2">Homodimer (By similarity). Interacts with both alpha- and beta-tubulin (By similarity).</text>
</comment>
<comment type="subcellular location">
    <subcellularLocation>
        <location evidence="1">Cytoplasmic vesicle</location>
        <location evidence="1">Secretory vesicle</location>
        <location evidence="1">Synaptic vesicle membrane</location>
        <topology evidence="1">Single-pass membrane protein</topology>
    </subcellularLocation>
    <subcellularLocation>
        <location evidence="1">Recycling endosome membrane</location>
        <topology evidence="1">Single-pass membrane protein</topology>
    </subcellularLocation>
    <text evidence="1">In mast cells, localizes to the endocytic recycling compartment.</text>
</comment>
<comment type="alternative products">
    <event type="alternative splicing"/>
    <isoform>
        <id>O00445-1</id>
        <name>1</name>
        <sequence type="displayed"/>
    </isoform>
    <isoform>
        <id>O00445-2</id>
        <name>2</name>
        <sequence type="described" ref="VSP_057177 VSP_057178"/>
    </isoform>
</comment>
<comment type="similarity">
    <text evidence="11">Belongs to the synaptotagmin family.</text>
</comment>